<proteinExistence type="evidence at transcript level"/>
<dbReference type="EMBL" id="AK003399">
    <property type="protein sequence ID" value="BAB22764.1"/>
    <property type="molecule type" value="mRNA"/>
</dbReference>
<dbReference type="EMBL" id="AK088374">
    <property type="protein sequence ID" value="BAC40313.1"/>
    <property type="molecule type" value="mRNA"/>
</dbReference>
<dbReference type="EMBL" id="AK145492">
    <property type="protein sequence ID" value="BAE26469.1"/>
    <property type="molecule type" value="mRNA"/>
</dbReference>
<dbReference type="EMBL" id="AK160779">
    <property type="protein sequence ID" value="BAE36003.1"/>
    <property type="molecule type" value="mRNA"/>
</dbReference>
<dbReference type="EMBL" id="AK162133">
    <property type="protein sequence ID" value="BAE36745.1"/>
    <property type="molecule type" value="mRNA"/>
</dbReference>
<dbReference type="EMBL" id="AK166796">
    <property type="protein sequence ID" value="BAE39024.1"/>
    <property type="molecule type" value="mRNA"/>
</dbReference>
<dbReference type="EMBL" id="AK167593">
    <property type="protein sequence ID" value="BAE39651.1"/>
    <property type="molecule type" value="mRNA"/>
</dbReference>
<dbReference type="EMBL" id="BC042717">
    <property type="protein sequence ID" value="AAH42717.1"/>
    <property type="molecule type" value="mRNA"/>
</dbReference>
<dbReference type="EMBL" id="BC082287">
    <property type="protein sequence ID" value="AAH82287.1"/>
    <property type="molecule type" value="mRNA"/>
</dbReference>
<dbReference type="EMBL" id="BC084682">
    <property type="protein sequence ID" value="AAH84682.1"/>
    <property type="molecule type" value="mRNA"/>
</dbReference>
<dbReference type="CCDS" id="CCDS19702.1"/>
<dbReference type="RefSeq" id="NP_077128.2">
    <property type="nucleotide sequence ID" value="NM_024166.6"/>
</dbReference>
<dbReference type="SMR" id="Q9D1L0"/>
<dbReference type="BioGRID" id="199534">
    <property type="interactions" value="4"/>
</dbReference>
<dbReference type="FunCoup" id="Q9D1L0">
    <property type="interactions" value="1978"/>
</dbReference>
<dbReference type="IntAct" id="Q9D1L0">
    <property type="interactions" value="2"/>
</dbReference>
<dbReference type="MINT" id="Q9D1L0"/>
<dbReference type="STRING" id="10090.ENSMUSP00000091835"/>
<dbReference type="GlyGen" id="Q9D1L0">
    <property type="glycosylation" value="2 sites, 1 O-linked glycan (1 site)"/>
</dbReference>
<dbReference type="iPTMnet" id="Q9D1L0"/>
<dbReference type="PhosphoSitePlus" id="Q9D1L0"/>
<dbReference type="SwissPalm" id="Q9D1L0"/>
<dbReference type="jPOST" id="Q9D1L0"/>
<dbReference type="PaxDb" id="10090-ENSMUSP00000091835"/>
<dbReference type="PeptideAtlas" id="Q9D1L0"/>
<dbReference type="ProteomicsDB" id="281601"/>
<dbReference type="Pumba" id="Q9D1L0"/>
<dbReference type="Antibodypedia" id="44807">
    <property type="antibodies" value="140 antibodies from 27 providers"/>
</dbReference>
<dbReference type="Ensembl" id="ENSMUST00000094280.4">
    <property type="protein sequence ID" value="ENSMUSP00000091835.4"/>
    <property type="gene ID" value="ENSMUSG00000070493.4"/>
</dbReference>
<dbReference type="GeneID" id="14004"/>
<dbReference type="KEGG" id="mmu:14004"/>
<dbReference type="UCSC" id="uc008ztn.1">
    <property type="organism name" value="mouse"/>
</dbReference>
<dbReference type="AGR" id="MGI:1261428"/>
<dbReference type="CTD" id="51142"/>
<dbReference type="MGI" id="MGI:1261428">
    <property type="gene designation" value="Chchd2"/>
</dbReference>
<dbReference type="VEuPathDB" id="HostDB:ENSMUSG00000070493"/>
<dbReference type="eggNOG" id="KOG4090">
    <property type="taxonomic scope" value="Eukaryota"/>
</dbReference>
<dbReference type="GeneTree" id="ENSGT00440000038159"/>
<dbReference type="HOGENOM" id="CLU_093520_2_2_1"/>
<dbReference type="InParanoid" id="Q9D1L0"/>
<dbReference type="OMA" id="RAPQMRI"/>
<dbReference type="OrthoDB" id="1106148at2759"/>
<dbReference type="PhylomeDB" id="Q9D1L0"/>
<dbReference type="TreeFam" id="TF318060"/>
<dbReference type="BioGRID-ORCS" id="14004">
    <property type="hits" value="9 hits in 63 CRISPR screens"/>
</dbReference>
<dbReference type="ChiTaRS" id="Chchd2">
    <property type="organism name" value="mouse"/>
</dbReference>
<dbReference type="PRO" id="PR:Q9D1L0"/>
<dbReference type="Proteomes" id="UP000000589">
    <property type="component" value="Chromosome 5"/>
</dbReference>
<dbReference type="RNAct" id="Q9D1L0">
    <property type="molecule type" value="protein"/>
</dbReference>
<dbReference type="Bgee" id="ENSMUSG00000070493">
    <property type="expression patterns" value="Expressed in right kidney and 69 other cell types or tissues"/>
</dbReference>
<dbReference type="GO" id="GO:0005758">
    <property type="term" value="C:mitochondrial intermembrane space"/>
    <property type="evidence" value="ECO:0000250"/>
    <property type="project" value="UniProtKB"/>
</dbReference>
<dbReference type="GO" id="GO:0005739">
    <property type="term" value="C:mitochondrion"/>
    <property type="evidence" value="ECO:0007005"/>
    <property type="project" value="MGI"/>
</dbReference>
<dbReference type="GO" id="GO:0005634">
    <property type="term" value="C:nucleus"/>
    <property type="evidence" value="ECO:0000250"/>
    <property type="project" value="UniProtKB"/>
</dbReference>
<dbReference type="GO" id="GO:0140297">
    <property type="term" value="F:DNA-binding transcription factor binding"/>
    <property type="evidence" value="ECO:0000250"/>
    <property type="project" value="UniProtKB"/>
</dbReference>
<dbReference type="GO" id="GO:0043565">
    <property type="term" value="F:sequence-specific DNA binding"/>
    <property type="evidence" value="ECO:0000250"/>
    <property type="project" value="UniProtKB"/>
</dbReference>
<dbReference type="GO" id="GO:0034599">
    <property type="term" value="P:cellular response to oxidative stress"/>
    <property type="evidence" value="ECO:0007669"/>
    <property type="project" value="Ensembl"/>
</dbReference>
<dbReference type="GO" id="GO:0007005">
    <property type="term" value="P:mitochondrion organization"/>
    <property type="evidence" value="ECO:0007669"/>
    <property type="project" value="InterPro"/>
</dbReference>
<dbReference type="GO" id="GO:1905448">
    <property type="term" value="P:positive regulation of mitochondrial ATP synthesis coupled electron transport"/>
    <property type="evidence" value="ECO:0007669"/>
    <property type="project" value="Ensembl"/>
</dbReference>
<dbReference type="GO" id="GO:0045944">
    <property type="term" value="P:positive regulation of transcription by RNA polymerase II"/>
    <property type="evidence" value="ECO:0000250"/>
    <property type="project" value="UniProtKB"/>
</dbReference>
<dbReference type="GO" id="GO:1900037">
    <property type="term" value="P:regulation of cellular response to hypoxia"/>
    <property type="evidence" value="ECO:0000250"/>
    <property type="project" value="UniProtKB"/>
</dbReference>
<dbReference type="InterPro" id="IPR010625">
    <property type="entry name" value="CHCH"/>
</dbReference>
<dbReference type="InterPro" id="IPR055304">
    <property type="entry name" value="CHCHD2/10-like"/>
</dbReference>
<dbReference type="PANTHER" id="PTHR13523">
    <property type="entry name" value="COILED-COIL-HELIX-COILED-COIL-HELIX DOMAIN CONTAINING 2/NUR77"/>
    <property type="match status" value="1"/>
</dbReference>
<dbReference type="PANTHER" id="PTHR13523:SF3">
    <property type="entry name" value="COILED-COIL-HELIX-COILED-COIL-HELIX DOMAIN-CONTAINING PROTEIN 2-RELATED"/>
    <property type="match status" value="1"/>
</dbReference>
<dbReference type="Pfam" id="PF06747">
    <property type="entry name" value="CHCH"/>
    <property type="match status" value="1"/>
</dbReference>
<dbReference type="PROSITE" id="PS51808">
    <property type="entry name" value="CHCH"/>
    <property type="match status" value="1"/>
</dbReference>
<sequence>MPRGSRSRTSRVTPPASRAPQMRAAPRRAPAAQPPAAAAPSAVGSPAAAPRQPGLMAQMATTAAGVAVGSAVGHTLGHAITGGFSGGGSAEPAKPDITYQEPQGAQLQNQQSFGPCSLEIKQFLECAQNQSDVKLCEGFNEVLRQCRIANGLM</sequence>
<organism>
    <name type="scientific">Mus musculus</name>
    <name type="common">Mouse</name>
    <dbReference type="NCBI Taxonomy" id="10090"/>
    <lineage>
        <taxon>Eukaryota</taxon>
        <taxon>Metazoa</taxon>
        <taxon>Chordata</taxon>
        <taxon>Craniata</taxon>
        <taxon>Vertebrata</taxon>
        <taxon>Euteleostomi</taxon>
        <taxon>Mammalia</taxon>
        <taxon>Eutheria</taxon>
        <taxon>Euarchontoglires</taxon>
        <taxon>Glires</taxon>
        <taxon>Rodentia</taxon>
        <taxon>Myomorpha</taxon>
        <taxon>Muroidea</taxon>
        <taxon>Muridae</taxon>
        <taxon>Murinae</taxon>
        <taxon>Mus</taxon>
        <taxon>Mus</taxon>
    </lineage>
</organism>
<feature type="chain" id="PRO_0000129161" description="Coiled-coil-helix-coiled-coil-helix domain-containing protein 2">
    <location>
        <begin position="1"/>
        <end position="153"/>
    </location>
</feature>
<feature type="domain" description="CHCH" evidence="2">
    <location>
        <begin position="113"/>
        <end position="153"/>
    </location>
</feature>
<feature type="region of interest" description="Disordered" evidence="3">
    <location>
        <begin position="1"/>
        <end position="51"/>
    </location>
</feature>
<feature type="region of interest" description="Disordered" evidence="3">
    <location>
        <begin position="78"/>
        <end position="106"/>
    </location>
</feature>
<feature type="short sequence motif" description="Cx9C motif 1" evidence="2">
    <location>
        <begin position="116"/>
        <end position="126"/>
    </location>
</feature>
<feature type="short sequence motif" description="Cx9C motif 2" evidence="2">
    <location>
        <begin position="136"/>
        <end position="146"/>
    </location>
</feature>
<feature type="compositionally biased region" description="Low complexity" evidence="3">
    <location>
        <begin position="14"/>
        <end position="51"/>
    </location>
</feature>
<feature type="disulfide bond" evidence="2">
    <location>
        <begin position="116"/>
        <end position="146"/>
    </location>
</feature>
<feature type="disulfide bond" evidence="2">
    <location>
        <begin position="126"/>
        <end position="136"/>
    </location>
</feature>
<reference key="1">
    <citation type="journal article" date="2005" name="Science">
        <title>The transcriptional landscape of the mammalian genome.</title>
        <authorList>
            <person name="Carninci P."/>
            <person name="Kasukawa T."/>
            <person name="Katayama S."/>
            <person name="Gough J."/>
            <person name="Frith M.C."/>
            <person name="Maeda N."/>
            <person name="Oyama R."/>
            <person name="Ravasi T."/>
            <person name="Lenhard B."/>
            <person name="Wells C."/>
            <person name="Kodzius R."/>
            <person name="Shimokawa K."/>
            <person name="Bajic V.B."/>
            <person name="Brenner S.E."/>
            <person name="Batalov S."/>
            <person name="Forrest A.R."/>
            <person name="Zavolan M."/>
            <person name="Davis M.J."/>
            <person name="Wilming L.G."/>
            <person name="Aidinis V."/>
            <person name="Allen J.E."/>
            <person name="Ambesi-Impiombato A."/>
            <person name="Apweiler R."/>
            <person name="Aturaliya R.N."/>
            <person name="Bailey T.L."/>
            <person name="Bansal M."/>
            <person name="Baxter L."/>
            <person name="Beisel K.W."/>
            <person name="Bersano T."/>
            <person name="Bono H."/>
            <person name="Chalk A.M."/>
            <person name="Chiu K.P."/>
            <person name="Choudhary V."/>
            <person name="Christoffels A."/>
            <person name="Clutterbuck D.R."/>
            <person name="Crowe M.L."/>
            <person name="Dalla E."/>
            <person name="Dalrymple B.P."/>
            <person name="de Bono B."/>
            <person name="Della Gatta G."/>
            <person name="di Bernardo D."/>
            <person name="Down T."/>
            <person name="Engstrom P."/>
            <person name="Fagiolini M."/>
            <person name="Faulkner G."/>
            <person name="Fletcher C.F."/>
            <person name="Fukushima T."/>
            <person name="Furuno M."/>
            <person name="Futaki S."/>
            <person name="Gariboldi M."/>
            <person name="Georgii-Hemming P."/>
            <person name="Gingeras T.R."/>
            <person name="Gojobori T."/>
            <person name="Green R.E."/>
            <person name="Gustincich S."/>
            <person name="Harbers M."/>
            <person name="Hayashi Y."/>
            <person name="Hensch T.K."/>
            <person name="Hirokawa N."/>
            <person name="Hill D."/>
            <person name="Huminiecki L."/>
            <person name="Iacono M."/>
            <person name="Ikeo K."/>
            <person name="Iwama A."/>
            <person name="Ishikawa T."/>
            <person name="Jakt M."/>
            <person name="Kanapin A."/>
            <person name="Katoh M."/>
            <person name="Kawasawa Y."/>
            <person name="Kelso J."/>
            <person name="Kitamura H."/>
            <person name="Kitano H."/>
            <person name="Kollias G."/>
            <person name="Krishnan S.P."/>
            <person name="Kruger A."/>
            <person name="Kummerfeld S.K."/>
            <person name="Kurochkin I.V."/>
            <person name="Lareau L.F."/>
            <person name="Lazarevic D."/>
            <person name="Lipovich L."/>
            <person name="Liu J."/>
            <person name="Liuni S."/>
            <person name="McWilliam S."/>
            <person name="Madan Babu M."/>
            <person name="Madera M."/>
            <person name="Marchionni L."/>
            <person name="Matsuda H."/>
            <person name="Matsuzawa S."/>
            <person name="Miki H."/>
            <person name="Mignone F."/>
            <person name="Miyake S."/>
            <person name="Morris K."/>
            <person name="Mottagui-Tabar S."/>
            <person name="Mulder N."/>
            <person name="Nakano N."/>
            <person name="Nakauchi H."/>
            <person name="Ng P."/>
            <person name="Nilsson R."/>
            <person name="Nishiguchi S."/>
            <person name="Nishikawa S."/>
            <person name="Nori F."/>
            <person name="Ohara O."/>
            <person name="Okazaki Y."/>
            <person name="Orlando V."/>
            <person name="Pang K.C."/>
            <person name="Pavan W.J."/>
            <person name="Pavesi G."/>
            <person name="Pesole G."/>
            <person name="Petrovsky N."/>
            <person name="Piazza S."/>
            <person name="Reed J."/>
            <person name="Reid J.F."/>
            <person name="Ring B.Z."/>
            <person name="Ringwald M."/>
            <person name="Rost B."/>
            <person name="Ruan Y."/>
            <person name="Salzberg S.L."/>
            <person name="Sandelin A."/>
            <person name="Schneider C."/>
            <person name="Schoenbach C."/>
            <person name="Sekiguchi K."/>
            <person name="Semple C.A."/>
            <person name="Seno S."/>
            <person name="Sessa L."/>
            <person name="Sheng Y."/>
            <person name="Shibata Y."/>
            <person name="Shimada H."/>
            <person name="Shimada K."/>
            <person name="Silva D."/>
            <person name="Sinclair B."/>
            <person name="Sperling S."/>
            <person name="Stupka E."/>
            <person name="Sugiura K."/>
            <person name="Sultana R."/>
            <person name="Takenaka Y."/>
            <person name="Taki K."/>
            <person name="Tammoja K."/>
            <person name="Tan S.L."/>
            <person name="Tang S."/>
            <person name="Taylor M.S."/>
            <person name="Tegner J."/>
            <person name="Teichmann S.A."/>
            <person name="Ueda H.R."/>
            <person name="van Nimwegen E."/>
            <person name="Verardo R."/>
            <person name="Wei C.L."/>
            <person name="Yagi K."/>
            <person name="Yamanishi H."/>
            <person name="Zabarovsky E."/>
            <person name="Zhu S."/>
            <person name="Zimmer A."/>
            <person name="Hide W."/>
            <person name="Bult C."/>
            <person name="Grimmond S.M."/>
            <person name="Teasdale R.D."/>
            <person name="Liu E.T."/>
            <person name="Brusic V."/>
            <person name="Quackenbush J."/>
            <person name="Wahlestedt C."/>
            <person name="Mattick J.S."/>
            <person name="Hume D.A."/>
            <person name="Kai C."/>
            <person name="Sasaki D."/>
            <person name="Tomaru Y."/>
            <person name="Fukuda S."/>
            <person name="Kanamori-Katayama M."/>
            <person name="Suzuki M."/>
            <person name="Aoki J."/>
            <person name="Arakawa T."/>
            <person name="Iida J."/>
            <person name="Imamura K."/>
            <person name="Itoh M."/>
            <person name="Kato T."/>
            <person name="Kawaji H."/>
            <person name="Kawagashira N."/>
            <person name="Kawashima T."/>
            <person name="Kojima M."/>
            <person name="Kondo S."/>
            <person name="Konno H."/>
            <person name="Nakano K."/>
            <person name="Ninomiya N."/>
            <person name="Nishio T."/>
            <person name="Okada M."/>
            <person name="Plessy C."/>
            <person name="Shibata K."/>
            <person name="Shiraki T."/>
            <person name="Suzuki S."/>
            <person name="Tagami M."/>
            <person name="Waki K."/>
            <person name="Watahiki A."/>
            <person name="Okamura-Oho Y."/>
            <person name="Suzuki H."/>
            <person name="Kawai J."/>
            <person name="Hayashizaki Y."/>
        </authorList>
    </citation>
    <scope>NUCLEOTIDE SEQUENCE [LARGE SCALE MRNA]</scope>
    <source>
        <strain>C57BL/6J</strain>
        <strain>NOD</strain>
        <tissue>Egg</tissue>
        <tissue>Head</tissue>
        <tissue>Placenta</tissue>
        <tissue>Thymus</tissue>
    </source>
</reference>
<reference key="2">
    <citation type="journal article" date="2004" name="Genome Res.">
        <title>The status, quality, and expansion of the NIH full-length cDNA project: the Mammalian Gene Collection (MGC).</title>
        <authorList>
            <consortium name="The MGC Project Team"/>
        </authorList>
    </citation>
    <scope>NUCLEOTIDE SEQUENCE [LARGE SCALE MRNA]</scope>
    <source>
        <strain>129</strain>
        <strain>FVB/N</strain>
        <tissue>Colon</tissue>
        <tissue>Mammary tumor</tissue>
    </source>
</reference>
<protein>
    <recommendedName>
        <fullName>Coiled-coil-helix-coiled-coil-helix domain-containing protein 2</fullName>
    </recommendedName>
</protein>
<evidence type="ECO:0000250" key="1">
    <source>
        <dbReference type="UniProtKB" id="Q9Y6H1"/>
    </source>
</evidence>
<evidence type="ECO:0000255" key="2">
    <source>
        <dbReference type="PROSITE-ProRule" id="PRU01150"/>
    </source>
</evidence>
<evidence type="ECO:0000256" key="3">
    <source>
        <dbReference type="SAM" id="MobiDB-lite"/>
    </source>
</evidence>
<accession>Q9D1L0</accession>
<accession>Q3TUG8</accession>
<keyword id="KW-0010">Activator</keyword>
<keyword id="KW-1015">Disulfide bond</keyword>
<keyword id="KW-0496">Mitochondrion</keyword>
<keyword id="KW-0539">Nucleus</keyword>
<keyword id="KW-1185">Reference proteome</keyword>
<keyword id="KW-0804">Transcription</keyword>
<name>CHCH2_MOUSE</name>
<gene>
    <name type="primary">Chchd2</name>
</gene>
<comment type="function">
    <text evidence="1">Transcription factor. Binds to the oxygen responsive element of COX4I2 and activates its transcription under hypoxia conditions (4% oxygen), as well as normoxia conditions (20% oxygen).</text>
</comment>
<comment type="subunit">
    <text evidence="1">Interacts with RBPJ.</text>
</comment>
<comment type="subcellular location">
    <subcellularLocation>
        <location evidence="1">Nucleus</location>
    </subcellularLocation>
    <subcellularLocation>
        <location evidence="1">Mitochondrion</location>
    </subcellularLocation>
    <subcellularLocation>
        <location evidence="1">Mitochondrion intermembrane space</location>
    </subcellularLocation>
    <text evidence="1">Mainly localized in the intermembrane space.</text>
</comment>